<evidence type="ECO:0000255" key="1">
    <source>
        <dbReference type="HAMAP-Rule" id="MF_00211"/>
    </source>
</evidence>
<proteinExistence type="inferred from homology"/>
<sequence length="338" mass="34611">MIDFKAIIAKVATGATLTRDEAASAFDGMMSGDATPSQMGALLMGLRVRGETVDEITGAVSTMRAKMLTVDAPADAVDIVGTGGDGSGSVNVSTCASFIVAGCGVPVAKHGNRALSSKSGAADVLNALGVRIDITPEHVGRCVTEAGIGFMFAPTHHPAMKNVGPTRVELATRTIFNLLGPLSNPAGVKRQMIGVFSRQWVQPLAQVLKNLGSESIWVVHGSDGLDEITLSGPTAVAELKNGEIRTFEVTPDEAGLPRAHAEALRGGDAEANAVALRSVLEGMPSPYRDVALLNAAAALVVAGKAKDLKEGVALGAKSIDSGAAEGRLRRLIAVTAAG</sequence>
<reference key="1">
    <citation type="submission" date="2006-03" db="EMBL/GenBank/DDBJ databases">
        <title>Complete sequence of Rhodopseudomonas palustris BisB5.</title>
        <authorList>
            <consortium name="US DOE Joint Genome Institute"/>
            <person name="Copeland A."/>
            <person name="Lucas S."/>
            <person name="Lapidus A."/>
            <person name="Barry K."/>
            <person name="Detter J.C."/>
            <person name="Glavina del Rio T."/>
            <person name="Hammon N."/>
            <person name="Israni S."/>
            <person name="Dalin E."/>
            <person name="Tice H."/>
            <person name="Pitluck S."/>
            <person name="Chain P."/>
            <person name="Malfatti S."/>
            <person name="Shin M."/>
            <person name="Vergez L."/>
            <person name="Schmutz J."/>
            <person name="Larimer F."/>
            <person name="Land M."/>
            <person name="Hauser L."/>
            <person name="Pelletier D.A."/>
            <person name="Kyrpides N."/>
            <person name="Lykidis A."/>
            <person name="Oda Y."/>
            <person name="Harwood C.S."/>
            <person name="Richardson P."/>
        </authorList>
    </citation>
    <scope>NUCLEOTIDE SEQUENCE [LARGE SCALE GENOMIC DNA]</scope>
    <source>
        <strain>BisB5</strain>
    </source>
</reference>
<keyword id="KW-0028">Amino-acid biosynthesis</keyword>
<keyword id="KW-0057">Aromatic amino acid biosynthesis</keyword>
<keyword id="KW-0328">Glycosyltransferase</keyword>
<keyword id="KW-0460">Magnesium</keyword>
<keyword id="KW-0479">Metal-binding</keyword>
<keyword id="KW-0808">Transferase</keyword>
<keyword id="KW-0822">Tryptophan biosynthesis</keyword>
<gene>
    <name evidence="1" type="primary">trpD</name>
    <name type="ordered locus">RPD_2828</name>
</gene>
<accession>Q136D3</accession>
<comment type="function">
    <text evidence="1">Catalyzes the transfer of the phosphoribosyl group of 5-phosphorylribose-1-pyrophosphate (PRPP) to anthranilate to yield N-(5'-phosphoribosyl)-anthranilate (PRA).</text>
</comment>
<comment type="catalytic activity">
    <reaction evidence="1">
        <text>N-(5-phospho-beta-D-ribosyl)anthranilate + diphosphate = 5-phospho-alpha-D-ribose 1-diphosphate + anthranilate</text>
        <dbReference type="Rhea" id="RHEA:11768"/>
        <dbReference type="ChEBI" id="CHEBI:16567"/>
        <dbReference type="ChEBI" id="CHEBI:18277"/>
        <dbReference type="ChEBI" id="CHEBI:33019"/>
        <dbReference type="ChEBI" id="CHEBI:58017"/>
        <dbReference type="EC" id="2.4.2.18"/>
    </reaction>
</comment>
<comment type="cofactor">
    <cofactor evidence="1">
        <name>Mg(2+)</name>
        <dbReference type="ChEBI" id="CHEBI:18420"/>
    </cofactor>
    <text evidence="1">Binds 2 magnesium ions per monomer.</text>
</comment>
<comment type="pathway">
    <text evidence="1">Amino-acid biosynthesis; L-tryptophan biosynthesis; L-tryptophan from chorismate: step 2/5.</text>
</comment>
<comment type="subunit">
    <text evidence="1">Homodimer.</text>
</comment>
<comment type="similarity">
    <text evidence="1">Belongs to the anthranilate phosphoribosyltransferase family.</text>
</comment>
<name>TRPD_RHOPS</name>
<organism>
    <name type="scientific">Rhodopseudomonas palustris (strain BisB5)</name>
    <dbReference type="NCBI Taxonomy" id="316057"/>
    <lineage>
        <taxon>Bacteria</taxon>
        <taxon>Pseudomonadati</taxon>
        <taxon>Pseudomonadota</taxon>
        <taxon>Alphaproteobacteria</taxon>
        <taxon>Hyphomicrobiales</taxon>
        <taxon>Nitrobacteraceae</taxon>
        <taxon>Rhodopseudomonas</taxon>
    </lineage>
</organism>
<feature type="chain" id="PRO_1000043058" description="Anthranilate phosphoribosyltransferase">
    <location>
        <begin position="1"/>
        <end position="338"/>
    </location>
</feature>
<feature type="binding site" evidence="1">
    <location>
        <position position="81"/>
    </location>
    <ligand>
        <name>5-phospho-alpha-D-ribose 1-diphosphate</name>
        <dbReference type="ChEBI" id="CHEBI:58017"/>
    </ligand>
</feature>
<feature type="binding site" evidence="1">
    <location>
        <position position="81"/>
    </location>
    <ligand>
        <name>anthranilate</name>
        <dbReference type="ChEBI" id="CHEBI:16567"/>
        <label>1</label>
    </ligand>
</feature>
<feature type="binding site" evidence="1">
    <location>
        <begin position="84"/>
        <end position="85"/>
    </location>
    <ligand>
        <name>5-phospho-alpha-D-ribose 1-diphosphate</name>
        <dbReference type="ChEBI" id="CHEBI:58017"/>
    </ligand>
</feature>
<feature type="binding site" evidence="1">
    <location>
        <position position="89"/>
    </location>
    <ligand>
        <name>5-phospho-alpha-D-ribose 1-diphosphate</name>
        <dbReference type="ChEBI" id="CHEBI:58017"/>
    </ligand>
</feature>
<feature type="binding site" evidence="1">
    <location>
        <begin position="91"/>
        <end position="94"/>
    </location>
    <ligand>
        <name>5-phospho-alpha-D-ribose 1-diphosphate</name>
        <dbReference type="ChEBI" id="CHEBI:58017"/>
    </ligand>
</feature>
<feature type="binding site" evidence="1">
    <location>
        <position position="93"/>
    </location>
    <ligand>
        <name>Mg(2+)</name>
        <dbReference type="ChEBI" id="CHEBI:18420"/>
        <label>1</label>
    </ligand>
</feature>
<feature type="binding site" evidence="1">
    <location>
        <begin position="109"/>
        <end position="117"/>
    </location>
    <ligand>
        <name>5-phospho-alpha-D-ribose 1-diphosphate</name>
        <dbReference type="ChEBI" id="CHEBI:58017"/>
    </ligand>
</feature>
<feature type="binding site" evidence="1">
    <location>
        <position position="112"/>
    </location>
    <ligand>
        <name>anthranilate</name>
        <dbReference type="ChEBI" id="CHEBI:16567"/>
        <label>1</label>
    </ligand>
</feature>
<feature type="binding site" evidence="1">
    <location>
        <position position="121"/>
    </location>
    <ligand>
        <name>5-phospho-alpha-D-ribose 1-diphosphate</name>
        <dbReference type="ChEBI" id="CHEBI:58017"/>
    </ligand>
</feature>
<feature type="binding site" evidence="1">
    <location>
        <position position="167"/>
    </location>
    <ligand>
        <name>anthranilate</name>
        <dbReference type="ChEBI" id="CHEBI:16567"/>
        <label>2</label>
    </ligand>
</feature>
<feature type="binding site" evidence="1">
    <location>
        <position position="226"/>
    </location>
    <ligand>
        <name>Mg(2+)</name>
        <dbReference type="ChEBI" id="CHEBI:18420"/>
        <label>2</label>
    </ligand>
</feature>
<feature type="binding site" evidence="1">
    <location>
        <position position="227"/>
    </location>
    <ligand>
        <name>Mg(2+)</name>
        <dbReference type="ChEBI" id="CHEBI:18420"/>
        <label>1</label>
    </ligand>
</feature>
<feature type="binding site" evidence="1">
    <location>
        <position position="227"/>
    </location>
    <ligand>
        <name>Mg(2+)</name>
        <dbReference type="ChEBI" id="CHEBI:18420"/>
        <label>2</label>
    </ligand>
</feature>
<protein>
    <recommendedName>
        <fullName evidence="1">Anthranilate phosphoribosyltransferase</fullName>
        <ecNumber evidence="1">2.4.2.18</ecNumber>
    </recommendedName>
</protein>
<dbReference type="EC" id="2.4.2.18" evidence="1"/>
<dbReference type="EMBL" id="CP000283">
    <property type="protein sequence ID" value="ABE40056.1"/>
    <property type="molecule type" value="Genomic_DNA"/>
</dbReference>
<dbReference type="SMR" id="Q136D3"/>
<dbReference type="STRING" id="316057.RPD_2828"/>
<dbReference type="KEGG" id="rpd:RPD_2828"/>
<dbReference type="eggNOG" id="COG0547">
    <property type="taxonomic scope" value="Bacteria"/>
</dbReference>
<dbReference type="HOGENOM" id="CLU_034315_2_1_5"/>
<dbReference type="BioCyc" id="RPAL316057:RPD_RS14205-MONOMER"/>
<dbReference type="UniPathway" id="UPA00035">
    <property type="reaction ID" value="UER00041"/>
</dbReference>
<dbReference type="Proteomes" id="UP000001818">
    <property type="component" value="Chromosome"/>
</dbReference>
<dbReference type="GO" id="GO:0005829">
    <property type="term" value="C:cytosol"/>
    <property type="evidence" value="ECO:0007669"/>
    <property type="project" value="TreeGrafter"/>
</dbReference>
<dbReference type="GO" id="GO:0004048">
    <property type="term" value="F:anthranilate phosphoribosyltransferase activity"/>
    <property type="evidence" value="ECO:0007669"/>
    <property type="project" value="UniProtKB-UniRule"/>
</dbReference>
<dbReference type="GO" id="GO:0000287">
    <property type="term" value="F:magnesium ion binding"/>
    <property type="evidence" value="ECO:0007669"/>
    <property type="project" value="UniProtKB-UniRule"/>
</dbReference>
<dbReference type="GO" id="GO:0000162">
    <property type="term" value="P:L-tryptophan biosynthetic process"/>
    <property type="evidence" value="ECO:0007669"/>
    <property type="project" value="UniProtKB-UniRule"/>
</dbReference>
<dbReference type="FunFam" id="3.40.1030.10:FF:000002">
    <property type="entry name" value="Anthranilate phosphoribosyltransferase"/>
    <property type="match status" value="1"/>
</dbReference>
<dbReference type="Gene3D" id="3.40.1030.10">
    <property type="entry name" value="Nucleoside phosphorylase/phosphoribosyltransferase catalytic domain"/>
    <property type="match status" value="1"/>
</dbReference>
<dbReference type="Gene3D" id="1.20.970.10">
    <property type="entry name" value="Transferase, Pyrimidine Nucleoside Phosphorylase, Chain C"/>
    <property type="match status" value="1"/>
</dbReference>
<dbReference type="HAMAP" id="MF_00211">
    <property type="entry name" value="TrpD"/>
    <property type="match status" value="1"/>
</dbReference>
<dbReference type="InterPro" id="IPR005940">
    <property type="entry name" value="Anthranilate_Pribosyl_Tfrase"/>
</dbReference>
<dbReference type="InterPro" id="IPR000312">
    <property type="entry name" value="Glycosyl_Trfase_fam3"/>
</dbReference>
<dbReference type="InterPro" id="IPR017459">
    <property type="entry name" value="Glycosyl_Trfase_fam3_N_dom"/>
</dbReference>
<dbReference type="InterPro" id="IPR036320">
    <property type="entry name" value="Glycosyl_Trfase_fam3_N_dom_sf"/>
</dbReference>
<dbReference type="InterPro" id="IPR035902">
    <property type="entry name" value="Nuc_phospho_transferase"/>
</dbReference>
<dbReference type="NCBIfam" id="TIGR01245">
    <property type="entry name" value="trpD"/>
    <property type="match status" value="1"/>
</dbReference>
<dbReference type="PANTHER" id="PTHR43285">
    <property type="entry name" value="ANTHRANILATE PHOSPHORIBOSYLTRANSFERASE"/>
    <property type="match status" value="1"/>
</dbReference>
<dbReference type="PANTHER" id="PTHR43285:SF2">
    <property type="entry name" value="ANTHRANILATE PHOSPHORIBOSYLTRANSFERASE"/>
    <property type="match status" value="1"/>
</dbReference>
<dbReference type="Pfam" id="PF02885">
    <property type="entry name" value="Glycos_trans_3N"/>
    <property type="match status" value="1"/>
</dbReference>
<dbReference type="Pfam" id="PF00591">
    <property type="entry name" value="Glycos_transf_3"/>
    <property type="match status" value="1"/>
</dbReference>
<dbReference type="SUPFAM" id="SSF52418">
    <property type="entry name" value="Nucleoside phosphorylase/phosphoribosyltransferase catalytic domain"/>
    <property type="match status" value="1"/>
</dbReference>
<dbReference type="SUPFAM" id="SSF47648">
    <property type="entry name" value="Nucleoside phosphorylase/phosphoribosyltransferase N-terminal domain"/>
    <property type="match status" value="1"/>
</dbReference>